<reference key="1">
    <citation type="submission" date="2008-01" db="EMBL/GenBank/DDBJ databases">
        <title>Complete sequence of chromosome of Caulobacter sp. K31.</title>
        <authorList>
            <consortium name="US DOE Joint Genome Institute"/>
            <person name="Copeland A."/>
            <person name="Lucas S."/>
            <person name="Lapidus A."/>
            <person name="Barry K."/>
            <person name="Glavina del Rio T."/>
            <person name="Dalin E."/>
            <person name="Tice H."/>
            <person name="Pitluck S."/>
            <person name="Bruce D."/>
            <person name="Goodwin L."/>
            <person name="Thompson L.S."/>
            <person name="Brettin T."/>
            <person name="Detter J.C."/>
            <person name="Han C."/>
            <person name="Schmutz J."/>
            <person name="Larimer F."/>
            <person name="Land M."/>
            <person name="Hauser L."/>
            <person name="Kyrpides N."/>
            <person name="Kim E."/>
            <person name="Stephens C."/>
            <person name="Richardson P."/>
        </authorList>
    </citation>
    <scope>NUCLEOTIDE SEQUENCE [LARGE SCALE GENOMIC DNA]</scope>
    <source>
        <strain>K31</strain>
    </source>
</reference>
<protein>
    <recommendedName>
        <fullName evidence="1">DNA ligase</fullName>
        <ecNumber evidence="1">6.5.1.2</ecNumber>
    </recommendedName>
    <alternativeName>
        <fullName evidence="1">Polydeoxyribonucleotide synthase [NAD(+)]</fullName>
    </alternativeName>
</protein>
<evidence type="ECO:0000255" key="1">
    <source>
        <dbReference type="HAMAP-Rule" id="MF_01588"/>
    </source>
</evidence>
<gene>
    <name evidence="1" type="primary">ligA</name>
    <name type="ordered locus">Caul_3097</name>
</gene>
<organism>
    <name type="scientific">Caulobacter sp. (strain K31)</name>
    <dbReference type="NCBI Taxonomy" id="366602"/>
    <lineage>
        <taxon>Bacteria</taxon>
        <taxon>Pseudomonadati</taxon>
        <taxon>Pseudomonadota</taxon>
        <taxon>Alphaproteobacteria</taxon>
        <taxon>Caulobacterales</taxon>
        <taxon>Caulobacteraceae</taxon>
        <taxon>Caulobacter</taxon>
    </lineage>
</organism>
<proteinExistence type="inferred from homology"/>
<sequence>MSQIAVADLTEAQAAEELERLADDLAAHDLRYHQQDAPTISDAEYDALKRRNLDIEDRFPHLVRDNSPSMRVGAARAEQFSPVEHGVPMLSLDNAFSNDEATEFDARIRRFLRLTNEPVFYTAEPKIDGLSASLRYEKGVLVQGATRGDGRMGEDVTANLRTIADIPHRLRGGDPQGGGWPDVIEIRGEVYVELEAFAAFNAAALEAGQRTYANPRNFAAGSLRQIDPKISAQRPLRFFAYAWGLTSEGFAATQWEALGKLRDWGFVTTAPPAERVQDAQGLLDIYAKFEVERPKLAFDIDGVVYKVDDLEQQRRLGFVSRSPRWAIARKFPAQQARTILEAIDLQVGRTGAITPVARLKPVTVGGVSVTNATLHNADEIARKDVRIGDTVILQRAGDVIPQIVGPVLEERPAGAVPFEFPTHCPCHLETPLVRESTAAGAETVVRRCSGEFACPFQRIEHLRHFVSRRAFDIEGLGEKQLAAFFEEGWIKEPADIFKLARDEAKLAELRERDGYGETSVANLVKGIEARRTIGLDRVIYGLGMRDIGETTSTVLARNFASPKGKGGFEDLQAAAERAAGQLPGAVYLELAGAPGVGPKARDELVEAGKGGLKADPWPEADSLEVKIGHAVPKLSKPARVALAERYGDWDTFAQALAQAGQGAPGEDYLQLAAIDGIGPVAAQSIARFFAEAHNREKVANLIAELDIQPVAKPKTDTAVAGKTIVFTGALEKMTRDEAKAQAEGLGAKVASSVSKKTDLVVAGPGAGSKLKTATELGIQVMTEDEWLAMVGG</sequence>
<comment type="function">
    <text evidence="1">DNA ligase that catalyzes the formation of phosphodiester linkages between 5'-phosphoryl and 3'-hydroxyl groups in double-stranded DNA using NAD as a coenzyme and as the energy source for the reaction. It is essential for DNA replication and repair of damaged DNA.</text>
</comment>
<comment type="catalytic activity">
    <reaction evidence="1">
        <text>NAD(+) + (deoxyribonucleotide)n-3'-hydroxyl + 5'-phospho-(deoxyribonucleotide)m = (deoxyribonucleotide)n+m + AMP + beta-nicotinamide D-nucleotide.</text>
        <dbReference type="EC" id="6.5.1.2"/>
    </reaction>
</comment>
<comment type="cofactor">
    <cofactor evidence="1">
        <name>Mg(2+)</name>
        <dbReference type="ChEBI" id="CHEBI:18420"/>
    </cofactor>
    <cofactor evidence="1">
        <name>Mn(2+)</name>
        <dbReference type="ChEBI" id="CHEBI:29035"/>
    </cofactor>
</comment>
<comment type="similarity">
    <text evidence="1">Belongs to the NAD-dependent DNA ligase family. LigA subfamily.</text>
</comment>
<dbReference type="EC" id="6.5.1.2" evidence="1"/>
<dbReference type="EMBL" id="CP000927">
    <property type="protein sequence ID" value="ABZ72224.1"/>
    <property type="molecule type" value="Genomic_DNA"/>
</dbReference>
<dbReference type="SMR" id="B0T1N5"/>
<dbReference type="STRING" id="366602.Caul_3097"/>
<dbReference type="KEGG" id="cak:Caul_3097"/>
<dbReference type="eggNOG" id="COG0272">
    <property type="taxonomic scope" value="Bacteria"/>
</dbReference>
<dbReference type="HOGENOM" id="CLU_007764_2_1_5"/>
<dbReference type="OrthoDB" id="9759736at2"/>
<dbReference type="GO" id="GO:0005829">
    <property type="term" value="C:cytosol"/>
    <property type="evidence" value="ECO:0007669"/>
    <property type="project" value="TreeGrafter"/>
</dbReference>
<dbReference type="GO" id="GO:0003677">
    <property type="term" value="F:DNA binding"/>
    <property type="evidence" value="ECO:0007669"/>
    <property type="project" value="InterPro"/>
</dbReference>
<dbReference type="GO" id="GO:0003911">
    <property type="term" value="F:DNA ligase (NAD+) activity"/>
    <property type="evidence" value="ECO:0007669"/>
    <property type="project" value="UniProtKB-UniRule"/>
</dbReference>
<dbReference type="GO" id="GO:0046872">
    <property type="term" value="F:metal ion binding"/>
    <property type="evidence" value="ECO:0007669"/>
    <property type="project" value="UniProtKB-KW"/>
</dbReference>
<dbReference type="GO" id="GO:0006281">
    <property type="term" value="P:DNA repair"/>
    <property type="evidence" value="ECO:0007669"/>
    <property type="project" value="UniProtKB-KW"/>
</dbReference>
<dbReference type="GO" id="GO:0006260">
    <property type="term" value="P:DNA replication"/>
    <property type="evidence" value="ECO:0007669"/>
    <property type="project" value="UniProtKB-KW"/>
</dbReference>
<dbReference type="CDD" id="cd17748">
    <property type="entry name" value="BRCT_DNA_ligase_like"/>
    <property type="match status" value="1"/>
</dbReference>
<dbReference type="CDD" id="cd00114">
    <property type="entry name" value="LIGANc"/>
    <property type="match status" value="1"/>
</dbReference>
<dbReference type="FunFam" id="1.10.150.20:FF:000007">
    <property type="entry name" value="DNA ligase"/>
    <property type="match status" value="1"/>
</dbReference>
<dbReference type="FunFam" id="2.40.50.140:FF:000012">
    <property type="entry name" value="DNA ligase"/>
    <property type="match status" value="1"/>
</dbReference>
<dbReference type="FunFam" id="3.30.470.30:FF:000001">
    <property type="entry name" value="DNA ligase"/>
    <property type="match status" value="1"/>
</dbReference>
<dbReference type="Gene3D" id="6.20.10.30">
    <property type="match status" value="1"/>
</dbReference>
<dbReference type="Gene3D" id="1.10.150.20">
    <property type="entry name" value="5' to 3' exonuclease, C-terminal subdomain"/>
    <property type="match status" value="3"/>
</dbReference>
<dbReference type="Gene3D" id="3.40.50.10190">
    <property type="entry name" value="BRCT domain"/>
    <property type="match status" value="1"/>
</dbReference>
<dbReference type="Gene3D" id="3.30.470.30">
    <property type="entry name" value="DNA ligase/mRNA capping enzyme"/>
    <property type="match status" value="1"/>
</dbReference>
<dbReference type="Gene3D" id="1.10.287.610">
    <property type="entry name" value="Helix hairpin bin"/>
    <property type="match status" value="1"/>
</dbReference>
<dbReference type="Gene3D" id="2.40.50.140">
    <property type="entry name" value="Nucleic acid-binding proteins"/>
    <property type="match status" value="1"/>
</dbReference>
<dbReference type="HAMAP" id="MF_01588">
    <property type="entry name" value="DNA_ligase_A"/>
    <property type="match status" value="1"/>
</dbReference>
<dbReference type="InterPro" id="IPR001357">
    <property type="entry name" value="BRCT_dom"/>
</dbReference>
<dbReference type="InterPro" id="IPR036420">
    <property type="entry name" value="BRCT_dom_sf"/>
</dbReference>
<dbReference type="InterPro" id="IPR001679">
    <property type="entry name" value="DNA_ligase"/>
</dbReference>
<dbReference type="InterPro" id="IPR018239">
    <property type="entry name" value="DNA_ligase_AS"/>
</dbReference>
<dbReference type="InterPro" id="IPR033136">
    <property type="entry name" value="DNA_ligase_CS"/>
</dbReference>
<dbReference type="InterPro" id="IPR013839">
    <property type="entry name" value="DNAligase_adenylation"/>
</dbReference>
<dbReference type="InterPro" id="IPR013840">
    <property type="entry name" value="DNAligase_N"/>
</dbReference>
<dbReference type="InterPro" id="IPR003583">
    <property type="entry name" value="Hlx-hairpin-Hlx_DNA-bd_motif"/>
</dbReference>
<dbReference type="InterPro" id="IPR012340">
    <property type="entry name" value="NA-bd_OB-fold"/>
</dbReference>
<dbReference type="InterPro" id="IPR004150">
    <property type="entry name" value="NAD_DNA_ligase_OB"/>
</dbReference>
<dbReference type="InterPro" id="IPR010994">
    <property type="entry name" value="RuvA_2-like"/>
</dbReference>
<dbReference type="NCBIfam" id="TIGR00575">
    <property type="entry name" value="dnlj"/>
    <property type="match status" value="1"/>
</dbReference>
<dbReference type="NCBIfam" id="NF005932">
    <property type="entry name" value="PRK07956.1"/>
    <property type="match status" value="1"/>
</dbReference>
<dbReference type="PANTHER" id="PTHR23389">
    <property type="entry name" value="CHROMOSOME TRANSMISSION FIDELITY FACTOR 18"/>
    <property type="match status" value="1"/>
</dbReference>
<dbReference type="PANTHER" id="PTHR23389:SF9">
    <property type="entry name" value="DNA LIGASE"/>
    <property type="match status" value="1"/>
</dbReference>
<dbReference type="Pfam" id="PF00533">
    <property type="entry name" value="BRCT"/>
    <property type="match status" value="1"/>
</dbReference>
<dbReference type="Pfam" id="PF01653">
    <property type="entry name" value="DNA_ligase_aden"/>
    <property type="match status" value="1"/>
</dbReference>
<dbReference type="Pfam" id="PF03120">
    <property type="entry name" value="DNA_ligase_OB"/>
    <property type="match status" value="1"/>
</dbReference>
<dbReference type="PIRSF" id="PIRSF001604">
    <property type="entry name" value="LigA"/>
    <property type="match status" value="1"/>
</dbReference>
<dbReference type="SMART" id="SM00292">
    <property type="entry name" value="BRCT"/>
    <property type="match status" value="1"/>
</dbReference>
<dbReference type="SMART" id="SM00278">
    <property type="entry name" value="HhH1"/>
    <property type="match status" value="3"/>
</dbReference>
<dbReference type="SMART" id="SM00532">
    <property type="entry name" value="LIGANc"/>
    <property type="match status" value="1"/>
</dbReference>
<dbReference type="SUPFAM" id="SSF52113">
    <property type="entry name" value="BRCT domain"/>
    <property type="match status" value="1"/>
</dbReference>
<dbReference type="SUPFAM" id="SSF56091">
    <property type="entry name" value="DNA ligase/mRNA capping enzyme, catalytic domain"/>
    <property type="match status" value="1"/>
</dbReference>
<dbReference type="SUPFAM" id="SSF50249">
    <property type="entry name" value="Nucleic acid-binding proteins"/>
    <property type="match status" value="1"/>
</dbReference>
<dbReference type="SUPFAM" id="SSF47781">
    <property type="entry name" value="RuvA domain 2-like"/>
    <property type="match status" value="1"/>
</dbReference>
<dbReference type="PROSITE" id="PS50172">
    <property type="entry name" value="BRCT"/>
    <property type="match status" value="1"/>
</dbReference>
<dbReference type="PROSITE" id="PS01055">
    <property type="entry name" value="DNA_LIGASE_N1"/>
    <property type="match status" value="1"/>
</dbReference>
<dbReference type="PROSITE" id="PS01056">
    <property type="entry name" value="DNA_LIGASE_N2"/>
    <property type="match status" value="1"/>
</dbReference>
<accession>B0T1N5</accession>
<name>DNLJ_CAUSK</name>
<keyword id="KW-0227">DNA damage</keyword>
<keyword id="KW-0234">DNA repair</keyword>
<keyword id="KW-0235">DNA replication</keyword>
<keyword id="KW-0436">Ligase</keyword>
<keyword id="KW-0460">Magnesium</keyword>
<keyword id="KW-0464">Manganese</keyword>
<keyword id="KW-0479">Metal-binding</keyword>
<keyword id="KW-0520">NAD</keyword>
<keyword id="KW-0862">Zinc</keyword>
<feature type="chain" id="PRO_0000340336" description="DNA ligase">
    <location>
        <begin position="1"/>
        <end position="792"/>
    </location>
</feature>
<feature type="domain" description="BRCT" evidence="1">
    <location>
        <begin position="714"/>
        <end position="792"/>
    </location>
</feature>
<feature type="active site" description="N6-AMP-lysine intermediate" evidence="1">
    <location>
        <position position="126"/>
    </location>
</feature>
<feature type="binding site" evidence="1">
    <location>
        <begin position="42"/>
        <end position="46"/>
    </location>
    <ligand>
        <name>NAD(+)</name>
        <dbReference type="ChEBI" id="CHEBI:57540"/>
    </ligand>
</feature>
<feature type="binding site" evidence="1">
    <location>
        <begin position="91"/>
        <end position="92"/>
    </location>
    <ligand>
        <name>NAD(+)</name>
        <dbReference type="ChEBI" id="CHEBI:57540"/>
    </ligand>
</feature>
<feature type="binding site" evidence="1">
    <location>
        <position position="124"/>
    </location>
    <ligand>
        <name>NAD(+)</name>
        <dbReference type="ChEBI" id="CHEBI:57540"/>
    </ligand>
</feature>
<feature type="binding site" evidence="1">
    <location>
        <position position="147"/>
    </location>
    <ligand>
        <name>NAD(+)</name>
        <dbReference type="ChEBI" id="CHEBI:57540"/>
    </ligand>
</feature>
<feature type="binding site" evidence="1">
    <location>
        <position position="189"/>
    </location>
    <ligand>
        <name>NAD(+)</name>
        <dbReference type="ChEBI" id="CHEBI:57540"/>
    </ligand>
</feature>
<feature type="binding site" evidence="1">
    <location>
        <position position="306"/>
    </location>
    <ligand>
        <name>NAD(+)</name>
        <dbReference type="ChEBI" id="CHEBI:57540"/>
    </ligand>
</feature>
<feature type="binding site" evidence="1">
    <location>
        <position position="330"/>
    </location>
    <ligand>
        <name>NAD(+)</name>
        <dbReference type="ChEBI" id="CHEBI:57540"/>
    </ligand>
</feature>
<feature type="binding site" evidence="1">
    <location>
        <position position="424"/>
    </location>
    <ligand>
        <name>Zn(2+)</name>
        <dbReference type="ChEBI" id="CHEBI:29105"/>
    </ligand>
</feature>
<feature type="binding site" evidence="1">
    <location>
        <position position="426"/>
    </location>
    <ligand>
        <name>Zn(2+)</name>
        <dbReference type="ChEBI" id="CHEBI:29105"/>
    </ligand>
</feature>
<feature type="binding site" evidence="1">
    <location>
        <position position="448"/>
    </location>
    <ligand>
        <name>Zn(2+)</name>
        <dbReference type="ChEBI" id="CHEBI:29105"/>
    </ligand>
</feature>
<feature type="binding site" evidence="1">
    <location>
        <position position="454"/>
    </location>
    <ligand>
        <name>Zn(2+)</name>
        <dbReference type="ChEBI" id="CHEBI:29105"/>
    </ligand>
</feature>